<organism>
    <name type="scientific">Pseudomonas paraeruginosa (strain DSM 24068 / PA7)</name>
    <name type="common">Pseudomonas aeruginosa (strain PA7)</name>
    <dbReference type="NCBI Taxonomy" id="381754"/>
    <lineage>
        <taxon>Bacteria</taxon>
        <taxon>Pseudomonadati</taxon>
        <taxon>Pseudomonadota</taxon>
        <taxon>Gammaproteobacteria</taxon>
        <taxon>Pseudomonadales</taxon>
        <taxon>Pseudomonadaceae</taxon>
        <taxon>Pseudomonas</taxon>
        <taxon>Pseudomonas paraeruginosa</taxon>
    </lineage>
</organism>
<name>Y6280_PSEP7</name>
<feature type="chain" id="PRO_1000067782" description="UPF0391 membrane protein PSPA7_6280">
    <location>
        <begin position="1"/>
        <end position="53"/>
    </location>
</feature>
<feature type="transmembrane region" description="Helical" evidence="1">
    <location>
        <begin position="4"/>
        <end position="24"/>
    </location>
</feature>
<feature type="transmembrane region" description="Helical" evidence="1">
    <location>
        <begin position="29"/>
        <end position="49"/>
    </location>
</feature>
<keyword id="KW-1003">Cell membrane</keyword>
<keyword id="KW-0472">Membrane</keyword>
<keyword id="KW-0812">Transmembrane</keyword>
<keyword id="KW-1133">Transmembrane helix</keyword>
<protein>
    <recommendedName>
        <fullName evidence="1">UPF0391 membrane protein PSPA7_6280</fullName>
    </recommendedName>
</protein>
<comment type="subcellular location">
    <subcellularLocation>
        <location evidence="1">Cell membrane</location>
        <topology evidence="1">Multi-pass membrane protein</topology>
    </subcellularLocation>
</comment>
<comment type="similarity">
    <text evidence="1">Belongs to the UPF0391 family.</text>
</comment>
<proteinExistence type="inferred from homology"/>
<accession>A6VEV6</accession>
<reference key="1">
    <citation type="submission" date="2007-06" db="EMBL/GenBank/DDBJ databases">
        <authorList>
            <person name="Dodson R.J."/>
            <person name="Harkins D."/>
            <person name="Paulsen I.T."/>
        </authorList>
    </citation>
    <scope>NUCLEOTIDE SEQUENCE [LARGE SCALE GENOMIC DNA]</scope>
    <source>
        <strain>DSM 24068 / PA7</strain>
    </source>
</reference>
<sequence>MLSWAITFLIIAIIAAVLGFGGIAGAATGIAKILFVLFLVLFVVSFFFGRRRG</sequence>
<dbReference type="EMBL" id="CP000744">
    <property type="protein sequence ID" value="ABR86882.1"/>
    <property type="molecule type" value="Genomic_DNA"/>
</dbReference>
<dbReference type="RefSeq" id="WP_003096961.1">
    <property type="nucleotide sequence ID" value="NC_009656.1"/>
</dbReference>
<dbReference type="KEGG" id="pap:PSPA7_6280"/>
<dbReference type="HOGENOM" id="CLU_187346_2_1_6"/>
<dbReference type="Proteomes" id="UP000001582">
    <property type="component" value="Chromosome"/>
</dbReference>
<dbReference type="GO" id="GO:0005886">
    <property type="term" value="C:plasma membrane"/>
    <property type="evidence" value="ECO:0007669"/>
    <property type="project" value="UniProtKB-SubCell"/>
</dbReference>
<dbReference type="HAMAP" id="MF_01361">
    <property type="entry name" value="UPF0391"/>
    <property type="match status" value="1"/>
</dbReference>
<dbReference type="InterPro" id="IPR009760">
    <property type="entry name" value="DUF1328"/>
</dbReference>
<dbReference type="NCBIfam" id="NF010226">
    <property type="entry name" value="PRK13682.1-1"/>
    <property type="match status" value="1"/>
</dbReference>
<dbReference type="NCBIfam" id="NF010228">
    <property type="entry name" value="PRK13682.1-3"/>
    <property type="match status" value="1"/>
</dbReference>
<dbReference type="NCBIfam" id="NF010229">
    <property type="entry name" value="PRK13682.1-4"/>
    <property type="match status" value="1"/>
</dbReference>
<dbReference type="Pfam" id="PF07043">
    <property type="entry name" value="DUF1328"/>
    <property type="match status" value="1"/>
</dbReference>
<dbReference type="PIRSF" id="PIRSF036466">
    <property type="entry name" value="UCP036466"/>
    <property type="match status" value="1"/>
</dbReference>
<gene>
    <name type="ordered locus">PSPA7_6280</name>
</gene>
<evidence type="ECO:0000255" key="1">
    <source>
        <dbReference type="HAMAP-Rule" id="MF_01361"/>
    </source>
</evidence>